<sequence>MDPCECSKTGTCNCGGSCKCTNCSCTTCKKSCCPCCPSGCTKCASGCVCKGKTCDTSCCQ</sequence>
<dbReference type="EMBL" id="X97270">
    <property type="protein sequence ID" value="CAA65925.1"/>
    <property type="molecule type" value="mRNA"/>
</dbReference>
<dbReference type="SMR" id="P52728"/>
<dbReference type="GO" id="GO:0046872">
    <property type="term" value="F:metal ion binding"/>
    <property type="evidence" value="ECO:0007669"/>
    <property type="project" value="UniProtKB-KW"/>
</dbReference>
<dbReference type="FunFam" id="4.10.10.10:FF:000001">
    <property type="entry name" value="Metallothionein"/>
    <property type="match status" value="1"/>
</dbReference>
<dbReference type="Gene3D" id="4.10.10.10">
    <property type="entry name" value="Metallothionein Isoform II"/>
    <property type="match status" value="1"/>
</dbReference>
<dbReference type="InterPro" id="IPR017854">
    <property type="entry name" value="Metalthion_dom_sf"/>
</dbReference>
<dbReference type="InterPro" id="IPR023587">
    <property type="entry name" value="Metalthion_dom_sf_vert"/>
</dbReference>
<dbReference type="InterPro" id="IPR000006">
    <property type="entry name" value="Metalthion_vert"/>
</dbReference>
<dbReference type="InterPro" id="IPR018064">
    <property type="entry name" value="Metalthion_vert_metal_BS"/>
</dbReference>
<dbReference type="PANTHER" id="PTHR23299">
    <property type="entry name" value="METALLOTHIONEIN"/>
    <property type="match status" value="1"/>
</dbReference>
<dbReference type="PANTHER" id="PTHR23299:SF24">
    <property type="entry name" value="METALLOTHIONEIN-1X"/>
    <property type="match status" value="1"/>
</dbReference>
<dbReference type="Pfam" id="PF00131">
    <property type="entry name" value="Metallothio"/>
    <property type="match status" value="1"/>
</dbReference>
<dbReference type="PRINTS" id="PR00860">
    <property type="entry name" value="MTVERTEBRATE"/>
</dbReference>
<dbReference type="SUPFAM" id="SSF57868">
    <property type="entry name" value="Metallothionein"/>
    <property type="match status" value="1"/>
</dbReference>
<dbReference type="PROSITE" id="PS00203">
    <property type="entry name" value="METALLOTHIONEIN_VRT"/>
    <property type="match status" value="1"/>
</dbReference>
<protein>
    <recommendedName>
        <fullName>Metallothionein</fullName>
        <shortName>MT</shortName>
    </recommendedName>
</protein>
<name>MT_ZOAVI</name>
<evidence type="ECO:0000250" key="1"/>
<evidence type="ECO:0000250" key="2">
    <source>
        <dbReference type="UniProtKB" id="P02795"/>
    </source>
</evidence>
<evidence type="ECO:0000250" key="3">
    <source>
        <dbReference type="UniProtKB" id="P62339"/>
    </source>
</evidence>
<evidence type="ECO:0000305" key="4"/>
<keyword id="KW-0479">Metal-binding</keyword>
<keyword id="KW-0480">Metal-thiolate cluster</keyword>
<feature type="chain" id="PRO_0000197318" description="Metallothionein">
    <location>
        <begin position="1"/>
        <end position="60"/>
    </location>
</feature>
<feature type="region of interest" description="Beta">
    <location>
        <begin position="1"/>
        <end position="28"/>
    </location>
</feature>
<feature type="region of interest" description="Alpha">
    <location>
        <begin position="29"/>
        <end position="60"/>
    </location>
</feature>
<feature type="binding site" evidence="2">
    <location>
        <position position="4"/>
    </location>
    <ligand>
        <name>a divalent metal cation</name>
        <dbReference type="ChEBI" id="CHEBI:60240"/>
        <label>1</label>
        <note>in cluster B</note>
    </ligand>
</feature>
<feature type="binding site" evidence="2">
    <location>
        <position position="6"/>
    </location>
    <ligand>
        <name>a divalent metal cation</name>
        <dbReference type="ChEBI" id="CHEBI:60240"/>
        <label>1</label>
        <note>in cluster B</note>
    </ligand>
</feature>
<feature type="binding site" evidence="2">
    <location>
        <position position="6"/>
    </location>
    <ligand>
        <name>a divalent metal cation</name>
        <dbReference type="ChEBI" id="CHEBI:60240"/>
        <label>2</label>
        <note>in cluster B</note>
    </ligand>
</feature>
<feature type="binding site" evidence="2">
    <location>
        <position position="12"/>
    </location>
    <ligand>
        <name>a divalent metal cation</name>
        <dbReference type="ChEBI" id="CHEBI:60240"/>
        <label>2</label>
        <note>in cluster B</note>
    </ligand>
</feature>
<feature type="binding site" evidence="2">
    <location>
        <position position="14"/>
    </location>
    <ligand>
        <name>a divalent metal cation</name>
        <dbReference type="ChEBI" id="CHEBI:60240"/>
        <label>2</label>
        <note>in cluster B</note>
    </ligand>
</feature>
<feature type="binding site" evidence="2">
    <location>
        <position position="14"/>
    </location>
    <ligand>
        <name>a divalent metal cation</name>
        <dbReference type="ChEBI" id="CHEBI:60240"/>
        <label>3</label>
        <note>in cluster B</note>
    </ligand>
</feature>
<feature type="binding site" evidence="2">
    <location>
        <position position="18"/>
    </location>
    <ligand>
        <name>a divalent metal cation</name>
        <dbReference type="ChEBI" id="CHEBI:60240"/>
        <label>3</label>
        <note>in cluster B</note>
    </ligand>
</feature>
<feature type="binding site" evidence="2">
    <location>
        <position position="20"/>
    </location>
    <ligand>
        <name>a divalent metal cation</name>
        <dbReference type="ChEBI" id="CHEBI:60240"/>
        <label>1</label>
        <note>in cluster B</note>
    </ligand>
</feature>
<feature type="binding site" evidence="2">
    <location>
        <position position="23"/>
    </location>
    <ligand>
        <name>a divalent metal cation</name>
        <dbReference type="ChEBI" id="CHEBI:60240"/>
        <label>1</label>
        <note>in cluster B</note>
    </ligand>
</feature>
<feature type="binding site" evidence="2">
    <location>
        <position position="23"/>
    </location>
    <ligand>
        <name>a divalent metal cation</name>
        <dbReference type="ChEBI" id="CHEBI:60240"/>
        <label>3</label>
        <note>in cluster B</note>
    </ligand>
</feature>
<feature type="binding site" evidence="2">
    <location>
        <position position="25"/>
    </location>
    <ligand>
        <name>a divalent metal cation</name>
        <dbReference type="ChEBI" id="CHEBI:60240"/>
        <label>2</label>
        <note>in cluster B</note>
    </ligand>
</feature>
<feature type="binding site" evidence="2">
    <location>
        <position position="28"/>
    </location>
    <ligand>
        <name>a divalent metal cation</name>
        <dbReference type="ChEBI" id="CHEBI:60240"/>
        <label>3</label>
        <note>in cluster B</note>
    </ligand>
</feature>
<feature type="binding site" evidence="2">
    <location>
        <position position="32"/>
    </location>
    <ligand>
        <name>a divalent metal cation</name>
        <dbReference type="ChEBI" id="CHEBI:60240"/>
        <label>4</label>
        <note>in cluster A</note>
    </ligand>
</feature>
<feature type="binding site" evidence="2">
    <location>
        <position position="33"/>
    </location>
    <ligand>
        <name>a divalent metal cation</name>
        <dbReference type="ChEBI" id="CHEBI:60240"/>
        <label>4</label>
        <note>in cluster A</note>
    </ligand>
</feature>
<feature type="binding site" evidence="2">
    <location>
        <position position="33"/>
    </location>
    <ligand>
        <name>a divalent metal cation</name>
        <dbReference type="ChEBI" id="CHEBI:60240"/>
        <label>5</label>
        <note>in cluster A</note>
    </ligand>
</feature>
<feature type="binding site" evidence="2">
    <location>
        <position position="35"/>
    </location>
    <ligand>
        <name>a divalent metal cation</name>
        <dbReference type="ChEBI" id="CHEBI:60240"/>
        <label>5</label>
        <note>in cluster A</note>
    </ligand>
</feature>
<feature type="binding site" evidence="2">
    <location>
        <position position="36"/>
    </location>
    <ligand>
        <name>a divalent metal cation</name>
        <dbReference type="ChEBI" id="CHEBI:60240"/>
        <label>5</label>
        <note>in cluster A</note>
    </ligand>
</feature>
<feature type="binding site" evidence="2">
    <location>
        <position position="36"/>
    </location>
    <ligand>
        <name>a divalent metal cation</name>
        <dbReference type="ChEBI" id="CHEBI:60240"/>
        <label>6</label>
        <note>in cluster A</note>
    </ligand>
</feature>
<feature type="binding site" evidence="2">
    <location>
        <position position="40"/>
    </location>
    <ligand>
        <name>a divalent metal cation</name>
        <dbReference type="ChEBI" id="CHEBI:60240"/>
        <label>6</label>
        <note>in cluster A</note>
    </ligand>
</feature>
<feature type="binding site" evidence="2">
    <location>
        <position position="43"/>
    </location>
    <ligand>
        <name>a divalent metal cation</name>
        <dbReference type="ChEBI" id="CHEBI:60240"/>
        <label>4</label>
        <note>in cluster A</note>
    </ligand>
</feature>
<feature type="binding site" evidence="2">
    <location>
        <position position="43"/>
    </location>
    <ligand>
        <name>a divalent metal cation</name>
        <dbReference type="ChEBI" id="CHEBI:60240"/>
        <label>6</label>
        <note>in cluster A</note>
    </ligand>
</feature>
<feature type="binding site" evidence="2">
    <location>
        <position position="47"/>
    </location>
    <ligand>
        <name>a divalent metal cation</name>
        <dbReference type="ChEBI" id="CHEBI:60240"/>
        <label>4</label>
        <note>in cluster A</note>
    </ligand>
</feature>
<feature type="binding site" evidence="2">
    <location>
        <position position="49"/>
    </location>
    <ligand>
        <name>a divalent metal cation</name>
        <dbReference type="ChEBI" id="CHEBI:60240"/>
        <label>5</label>
        <note>in cluster A</note>
    </ligand>
</feature>
<feature type="binding site" evidence="2">
    <location>
        <position position="49"/>
    </location>
    <ligand>
        <name>a divalent metal cation</name>
        <dbReference type="ChEBI" id="CHEBI:60240"/>
        <label>7</label>
        <note>in cluster A</note>
    </ligand>
</feature>
<feature type="binding site" evidence="3">
    <location>
        <position position="54"/>
    </location>
    <ligand>
        <name>a divalent metal cation</name>
        <dbReference type="ChEBI" id="CHEBI:60240"/>
        <label>7</label>
        <note>in cluster A</note>
    </ligand>
</feature>
<feature type="binding site" evidence="2">
    <location>
        <position position="58"/>
    </location>
    <ligand>
        <name>a divalent metal cation</name>
        <dbReference type="ChEBI" id="CHEBI:60240"/>
        <label>7</label>
        <note>in cluster A</note>
    </ligand>
</feature>
<feature type="binding site" evidence="2">
    <location>
        <position position="59"/>
    </location>
    <ligand>
        <name>a divalent metal cation</name>
        <dbReference type="ChEBI" id="CHEBI:60240"/>
        <label>6</label>
        <note>in cluster A</note>
    </ligand>
</feature>
<feature type="binding site" evidence="2">
    <location>
        <position position="59"/>
    </location>
    <ligand>
        <name>a divalent metal cation</name>
        <dbReference type="ChEBI" id="CHEBI:60240"/>
        <label>7</label>
        <note>in cluster A</note>
    </ligand>
</feature>
<organism>
    <name type="scientific">Zoarces viviparus</name>
    <name type="common">Viviparous eelpout</name>
    <name type="synonym">Blennius viviparus</name>
    <dbReference type="NCBI Taxonomy" id="48416"/>
    <lineage>
        <taxon>Eukaryota</taxon>
        <taxon>Metazoa</taxon>
        <taxon>Chordata</taxon>
        <taxon>Craniata</taxon>
        <taxon>Vertebrata</taxon>
        <taxon>Euteleostomi</taxon>
        <taxon>Actinopterygii</taxon>
        <taxon>Neopterygii</taxon>
        <taxon>Teleostei</taxon>
        <taxon>Neoteleostei</taxon>
        <taxon>Acanthomorphata</taxon>
        <taxon>Eupercaria</taxon>
        <taxon>Perciformes</taxon>
        <taxon>Cottioidei</taxon>
        <taxon>Zoarcales</taxon>
        <taxon>Zoarcidae</taxon>
        <taxon>Zoarcinae</taxon>
        <taxon>Zoarces</taxon>
    </lineage>
</organism>
<reference key="1">
    <citation type="submission" date="1996-04" db="EMBL/GenBank/DDBJ databases">
        <title>The use of metallothionein genes for determining the phylogenetic and evolutionary relationship between extant teleosts.</title>
        <authorList>
            <person name="Kille P."/>
            <person name="Olsson P.-E."/>
        </authorList>
    </citation>
    <scope>NUCLEOTIDE SEQUENCE [MRNA]</scope>
    <source>
        <tissue>Liver</tissue>
    </source>
</reference>
<proteinExistence type="inferred from homology"/>
<comment type="function">
    <text evidence="1">Metallothioneins have a high content of cysteine residues that bind various heavy metals.</text>
</comment>
<comment type="domain">
    <text>Class I metallothioneins contain 2 metal-binding domains: four divalent ions are chelated within cluster A of the alpha domain and are coordinated via cysteinyl thiolate bridges to 11 cysteine ligands. Cluster B, the corresponding region within the beta domain, can ligate three divalent ions to 9 cysteines.</text>
</comment>
<comment type="similarity">
    <text evidence="4">Belongs to the metallothionein superfamily. Type 1 family.</text>
</comment>
<accession>P52728</accession>
<gene>
    <name type="primary">mt</name>
</gene>